<gene>
    <name type="primary">Map2k3</name>
    <name type="synonym">Mkk3</name>
    <name type="synonym">Prkmk3</name>
</gene>
<protein>
    <recommendedName>
        <fullName>Dual specificity mitogen-activated protein kinase kinase 3</fullName>
        <shortName>MAP kinase kinase 3</shortName>
        <shortName>MAPKK 3</shortName>
        <ecNumber evidence="1">2.7.12.2</ecNumber>
    </recommendedName>
    <alternativeName>
        <fullName>MAPK/ERK kinase 3</fullName>
        <shortName>MEK 3</shortName>
    </alternativeName>
</protein>
<comment type="function">
    <text evidence="1">Dual specificity kinase. Is activated by cytokines and environmental stress in vivo. Catalyzes the concomitant phosphorylation of a threonine and a tyrosine residue in the MAP kinase p38. Part of a signaling cascade that begins with the activation of the adrenergic receptor ADRA1B and leads to the activation of MAPK14.</text>
</comment>
<comment type="catalytic activity">
    <reaction evidence="1">
        <text>L-seryl-[protein] + ATP = O-phospho-L-seryl-[protein] + ADP + H(+)</text>
        <dbReference type="Rhea" id="RHEA:17989"/>
        <dbReference type="Rhea" id="RHEA-COMP:9863"/>
        <dbReference type="Rhea" id="RHEA-COMP:11604"/>
        <dbReference type="ChEBI" id="CHEBI:15378"/>
        <dbReference type="ChEBI" id="CHEBI:29999"/>
        <dbReference type="ChEBI" id="CHEBI:30616"/>
        <dbReference type="ChEBI" id="CHEBI:83421"/>
        <dbReference type="ChEBI" id="CHEBI:456216"/>
        <dbReference type="EC" id="2.7.12.2"/>
    </reaction>
</comment>
<comment type="catalytic activity">
    <reaction evidence="1">
        <text>L-threonyl-[protein] + ATP = O-phospho-L-threonyl-[protein] + ADP + H(+)</text>
        <dbReference type="Rhea" id="RHEA:46608"/>
        <dbReference type="Rhea" id="RHEA-COMP:11060"/>
        <dbReference type="Rhea" id="RHEA-COMP:11605"/>
        <dbReference type="ChEBI" id="CHEBI:15378"/>
        <dbReference type="ChEBI" id="CHEBI:30013"/>
        <dbReference type="ChEBI" id="CHEBI:30616"/>
        <dbReference type="ChEBI" id="CHEBI:61977"/>
        <dbReference type="ChEBI" id="CHEBI:456216"/>
        <dbReference type="EC" id="2.7.12.2"/>
    </reaction>
</comment>
<comment type="catalytic activity">
    <reaction evidence="1">
        <text>L-tyrosyl-[protein] + ATP = O-phospho-L-tyrosyl-[protein] + ADP + H(+)</text>
        <dbReference type="Rhea" id="RHEA:10596"/>
        <dbReference type="Rhea" id="RHEA-COMP:10136"/>
        <dbReference type="Rhea" id="RHEA-COMP:20101"/>
        <dbReference type="ChEBI" id="CHEBI:15378"/>
        <dbReference type="ChEBI" id="CHEBI:30616"/>
        <dbReference type="ChEBI" id="CHEBI:46858"/>
        <dbReference type="ChEBI" id="CHEBI:61978"/>
        <dbReference type="ChEBI" id="CHEBI:456216"/>
        <dbReference type="EC" id="2.7.12.2"/>
    </reaction>
</comment>
<comment type="activity regulation">
    <text evidence="1">Activated by dual phosphorylation on Ser-218 and Thr-222.</text>
</comment>
<comment type="subunit">
    <text evidence="1 5">Component of a signaling complex containing at least AKAP13, PKN1, MAPK14, ZAK and MAP2K3. Within this complex, AKAP13 interacts directly with PKN1, which in turn recruits MAPK14, MAP2K3 and ZAK. Binds to DYRK1B/MIRK and increases its kinase activity (By similarity). Part of a complex with MAP3K3, RAC1 and CCM2 (PubMed:14634666). Interacts with ARRB1 (By similarity).</text>
</comment>
<comment type="alternative products">
    <event type="alternative splicing"/>
    <isoform>
        <id>O09110-1</id>
        <name>2</name>
        <name>3b</name>
        <sequence type="displayed"/>
    </isoform>
    <isoform>
        <id>O09110-2</id>
        <name>1</name>
        <sequence type="described" ref="VSP_004879"/>
    </isoform>
</comment>
<comment type="PTM">
    <text evidence="1">Autophosphorylated. Phosphorylation on Ser-218 and Thr-222 by MAP kinase kinase kinases positively regulates the kinase activity. Phosphorylated by TAOK2.</text>
</comment>
<comment type="similarity">
    <text evidence="8">Belongs to the protein kinase superfamily. STE Ser/Thr protein kinase family. MAP kinase kinase subfamily.</text>
</comment>
<reference key="1">
    <citation type="submission" date="1997-01" db="EMBL/GenBank/DDBJ databases">
        <authorList>
            <person name="Neininger A."/>
            <person name="Gaestel M."/>
        </authorList>
    </citation>
    <scope>NUCLEOTIDE SEQUENCE [MRNA] (ISOFORM 1)</scope>
</reference>
<reference key="2">
    <citation type="journal article" date="1996" name="J. Biol. Chem.">
        <title>Purification and identification of a major activator for p38 from osmotically shocked cells: activation of mitogen-activated protein kinase kinase 6 by osmotic shock, tumor necrosis factor-alpha, and H2O2.</title>
        <authorList>
            <person name="Moriguchi T."/>
            <person name="Toyoshima F."/>
            <person name="Gotoh Y."/>
            <person name="Iwamatsu A."/>
            <person name="Irie K."/>
            <person name="Mori E."/>
            <person name="Kuroyanagi N."/>
            <person name="Hagiwara M."/>
            <person name="Matsumoto K."/>
            <person name="Nishida E."/>
        </authorList>
    </citation>
    <scope>NUCLEOTIDE SEQUENCE [MRNA] (ISOFORM 2)</scope>
</reference>
<reference key="3">
    <citation type="journal article" date="2005" name="Science">
        <title>The transcriptional landscape of the mammalian genome.</title>
        <authorList>
            <person name="Carninci P."/>
            <person name="Kasukawa T."/>
            <person name="Katayama S."/>
            <person name="Gough J."/>
            <person name="Frith M.C."/>
            <person name="Maeda N."/>
            <person name="Oyama R."/>
            <person name="Ravasi T."/>
            <person name="Lenhard B."/>
            <person name="Wells C."/>
            <person name="Kodzius R."/>
            <person name="Shimokawa K."/>
            <person name="Bajic V.B."/>
            <person name="Brenner S.E."/>
            <person name="Batalov S."/>
            <person name="Forrest A.R."/>
            <person name="Zavolan M."/>
            <person name="Davis M.J."/>
            <person name="Wilming L.G."/>
            <person name="Aidinis V."/>
            <person name="Allen J.E."/>
            <person name="Ambesi-Impiombato A."/>
            <person name="Apweiler R."/>
            <person name="Aturaliya R.N."/>
            <person name="Bailey T.L."/>
            <person name="Bansal M."/>
            <person name="Baxter L."/>
            <person name="Beisel K.W."/>
            <person name="Bersano T."/>
            <person name="Bono H."/>
            <person name="Chalk A.M."/>
            <person name="Chiu K.P."/>
            <person name="Choudhary V."/>
            <person name="Christoffels A."/>
            <person name="Clutterbuck D.R."/>
            <person name="Crowe M.L."/>
            <person name="Dalla E."/>
            <person name="Dalrymple B.P."/>
            <person name="de Bono B."/>
            <person name="Della Gatta G."/>
            <person name="di Bernardo D."/>
            <person name="Down T."/>
            <person name="Engstrom P."/>
            <person name="Fagiolini M."/>
            <person name="Faulkner G."/>
            <person name="Fletcher C.F."/>
            <person name="Fukushima T."/>
            <person name="Furuno M."/>
            <person name="Futaki S."/>
            <person name="Gariboldi M."/>
            <person name="Georgii-Hemming P."/>
            <person name="Gingeras T.R."/>
            <person name="Gojobori T."/>
            <person name="Green R.E."/>
            <person name="Gustincich S."/>
            <person name="Harbers M."/>
            <person name="Hayashi Y."/>
            <person name="Hensch T.K."/>
            <person name="Hirokawa N."/>
            <person name="Hill D."/>
            <person name="Huminiecki L."/>
            <person name="Iacono M."/>
            <person name="Ikeo K."/>
            <person name="Iwama A."/>
            <person name="Ishikawa T."/>
            <person name="Jakt M."/>
            <person name="Kanapin A."/>
            <person name="Katoh M."/>
            <person name="Kawasawa Y."/>
            <person name="Kelso J."/>
            <person name="Kitamura H."/>
            <person name="Kitano H."/>
            <person name="Kollias G."/>
            <person name="Krishnan S.P."/>
            <person name="Kruger A."/>
            <person name="Kummerfeld S.K."/>
            <person name="Kurochkin I.V."/>
            <person name="Lareau L.F."/>
            <person name="Lazarevic D."/>
            <person name="Lipovich L."/>
            <person name="Liu J."/>
            <person name="Liuni S."/>
            <person name="McWilliam S."/>
            <person name="Madan Babu M."/>
            <person name="Madera M."/>
            <person name="Marchionni L."/>
            <person name="Matsuda H."/>
            <person name="Matsuzawa S."/>
            <person name="Miki H."/>
            <person name="Mignone F."/>
            <person name="Miyake S."/>
            <person name="Morris K."/>
            <person name="Mottagui-Tabar S."/>
            <person name="Mulder N."/>
            <person name="Nakano N."/>
            <person name="Nakauchi H."/>
            <person name="Ng P."/>
            <person name="Nilsson R."/>
            <person name="Nishiguchi S."/>
            <person name="Nishikawa S."/>
            <person name="Nori F."/>
            <person name="Ohara O."/>
            <person name="Okazaki Y."/>
            <person name="Orlando V."/>
            <person name="Pang K.C."/>
            <person name="Pavan W.J."/>
            <person name="Pavesi G."/>
            <person name="Pesole G."/>
            <person name="Petrovsky N."/>
            <person name="Piazza S."/>
            <person name="Reed J."/>
            <person name="Reid J.F."/>
            <person name="Ring B.Z."/>
            <person name="Ringwald M."/>
            <person name="Rost B."/>
            <person name="Ruan Y."/>
            <person name="Salzberg S.L."/>
            <person name="Sandelin A."/>
            <person name="Schneider C."/>
            <person name="Schoenbach C."/>
            <person name="Sekiguchi K."/>
            <person name="Semple C.A."/>
            <person name="Seno S."/>
            <person name="Sessa L."/>
            <person name="Sheng Y."/>
            <person name="Shibata Y."/>
            <person name="Shimada H."/>
            <person name="Shimada K."/>
            <person name="Silva D."/>
            <person name="Sinclair B."/>
            <person name="Sperling S."/>
            <person name="Stupka E."/>
            <person name="Sugiura K."/>
            <person name="Sultana R."/>
            <person name="Takenaka Y."/>
            <person name="Taki K."/>
            <person name="Tammoja K."/>
            <person name="Tan S.L."/>
            <person name="Tang S."/>
            <person name="Taylor M.S."/>
            <person name="Tegner J."/>
            <person name="Teichmann S.A."/>
            <person name="Ueda H.R."/>
            <person name="van Nimwegen E."/>
            <person name="Verardo R."/>
            <person name="Wei C.L."/>
            <person name="Yagi K."/>
            <person name="Yamanishi H."/>
            <person name="Zabarovsky E."/>
            <person name="Zhu S."/>
            <person name="Zimmer A."/>
            <person name="Hide W."/>
            <person name="Bult C."/>
            <person name="Grimmond S.M."/>
            <person name="Teasdale R.D."/>
            <person name="Liu E.T."/>
            <person name="Brusic V."/>
            <person name="Quackenbush J."/>
            <person name="Wahlestedt C."/>
            <person name="Mattick J.S."/>
            <person name="Hume D.A."/>
            <person name="Kai C."/>
            <person name="Sasaki D."/>
            <person name="Tomaru Y."/>
            <person name="Fukuda S."/>
            <person name="Kanamori-Katayama M."/>
            <person name="Suzuki M."/>
            <person name="Aoki J."/>
            <person name="Arakawa T."/>
            <person name="Iida J."/>
            <person name="Imamura K."/>
            <person name="Itoh M."/>
            <person name="Kato T."/>
            <person name="Kawaji H."/>
            <person name="Kawagashira N."/>
            <person name="Kawashima T."/>
            <person name="Kojima M."/>
            <person name="Kondo S."/>
            <person name="Konno H."/>
            <person name="Nakano K."/>
            <person name="Ninomiya N."/>
            <person name="Nishio T."/>
            <person name="Okada M."/>
            <person name="Plessy C."/>
            <person name="Shibata K."/>
            <person name="Shiraki T."/>
            <person name="Suzuki S."/>
            <person name="Tagami M."/>
            <person name="Waki K."/>
            <person name="Watahiki A."/>
            <person name="Okamura-Oho Y."/>
            <person name="Suzuki H."/>
            <person name="Kawai J."/>
            <person name="Hayashizaki Y."/>
        </authorList>
    </citation>
    <scope>NUCLEOTIDE SEQUENCE [LARGE SCALE MRNA] (ISOFORM 2)</scope>
    <source>
        <strain>C57BL/6J</strain>
        <tissue>Embryonic liver</tissue>
        <tissue>Small intestine</tissue>
    </source>
</reference>
<reference key="4">
    <citation type="journal article" date="2004" name="Genome Res.">
        <title>The status, quality, and expansion of the NIH full-length cDNA project: the Mammalian Gene Collection (MGC).</title>
        <authorList>
            <consortium name="The MGC Project Team"/>
        </authorList>
    </citation>
    <scope>NUCLEOTIDE SEQUENCE [LARGE SCALE MRNA] (ISOFORM 1)</scope>
    <source>
        <tissue>Mammary gland</tissue>
    </source>
</reference>
<reference key="5">
    <citation type="journal article" date="2003" name="Nat. Cell Biol.">
        <title>Rac-MEKK3-MKK3 scaffolding for p38 MAPK activation during hyperosmotic shock.</title>
        <authorList>
            <person name="Uhlik M.T."/>
            <person name="Abell A.N."/>
            <person name="Johnson N.L."/>
            <person name="Sun W."/>
            <person name="Cuevas B.D."/>
            <person name="Lobel-Rice K.E."/>
            <person name="Horne E.A."/>
            <person name="Dell'Acqua M.L."/>
            <person name="Johnson G.L."/>
        </authorList>
    </citation>
    <scope>INTERACTION WITH MAP3K3; RAC1 AND CCM2</scope>
</reference>
<reference key="6">
    <citation type="journal article" date="2010" name="Cell">
        <title>A tissue-specific atlas of mouse protein phosphorylation and expression.</title>
        <authorList>
            <person name="Huttlin E.L."/>
            <person name="Jedrychowski M.P."/>
            <person name="Elias J.E."/>
            <person name="Goswami T."/>
            <person name="Rad R."/>
            <person name="Beausoleil S.A."/>
            <person name="Villen J."/>
            <person name="Haas W."/>
            <person name="Sowa M.E."/>
            <person name="Gygi S.P."/>
        </authorList>
    </citation>
    <scope>IDENTIFICATION BY MASS SPECTROMETRY [LARGE SCALE ANALYSIS]</scope>
    <source>
        <tissue>Brown adipose tissue</tissue>
        <tissue>Heart</tissue>
        <tissue>Kidney</tissue>
        <tissue>Liver</tissue>
        <tissue>Lung</tissue>
        <tissue>Pancreas</tissue>
        <tissue>Spleen</tissue>
        <tissue>Testis</tissue>
    </source>
</reference>
<accession>O09110</accession>
<accession>P97293</accession>
<accession>Q91VX1</accession>
<name>MP2K3_MOUSE</name>
<sequence>MESPAASPPASLPQTKGKSKRKKDLRISCVSKPPVSNPTPPRNLDSRTFITIGDRNFEVEADDLVTISELGRGAYGVVEKVRHAQSGTIMAVKRIRATVNTQEQKRLLMDLDINMRTVDCFYTVTFYGALFREGDVWICMELMDTSLDKFYRKVLEKNMKIPEDILGEIAVSIVRALEHLHSKLSVIHRDVKPSNVLINKEGHVKMCDFGISGYLVDSVAKTMDAGCKPYMAPERINPELNQKGYNVKSDVWSLGITMIEMAILRFPYESWGTPFQQLKQVVEEPSPQLPADQFSPEFVDFTSQCLRKNPAERMSYLELMEHPFFTLHKTKKTDIAAFVKEILGEDS</sequence>
<proteinExistence type="evidence at protein level"/>
<evidence type="ECO:0000250" key="1">
    <source>
        <dbReference type="UniProtKB" id="P46734"/>
    </source>
</evidence>
<evidence type="ECO:0000255" key="2">
    <source>
        <dbReference type="PROSITE-ProRule" id="PRU00159"/>
    </source>
</evidence>
<evidence type="ECO:0000255" key="3">
    <source>
        <dbReference type="PROSITE-ProRule" id="PRU10027"/>
    </source>
</evidence>
<evidence type="ECO:0000256" key="4">
    <source>
        <dbReference type="SAM" id="MobiDB-lite"/>
    </source>
</evidence>
<evidence type="ECO:0000269" key="5">
    <source>
    </source>
</evidence>
<evidence type="ECO:0000303" key="6">
    <source>
    </source>
</evidence>
<evidence type="ECO:0000303" key="7">
    <source ref="1"/>
</evidence>
<evidence type="ECO:0000305" key="8"/>
<dbReference type="EC" id="2.7.12.2" evidence="1"/>
<dbReference type="EMBL" id="X93150">
    <property type="protein sequence ID" value="CAA63649.1"/>
    <property type="molecule type" value="mRNA"/>
</dbReference>
<dbReference type="EMBL" id="D87115">
    <property type="protein sequence ID" value="BAA13247.1"/>
    <property type="molecule type" value="mRNA"/>
</dbReference>
<dbReference type="EMBL" id="AK011002">
    <property type="protein sequence ID" value="BAB27321.1"/>
    <property type="molecule type" value="mRNA"/>
</dbReference>
<dbReference type="EMBL" id="AK008141">
    <property type="protein sequence ID" value="BAB25489.1"/>
    <property type="molecule type" value="mRNA"/>
</dbReference>
<dbReference type="EMBL" id="BC007467">
    <property type="protein sequence ID" value="AAH07467.1"/>
    <property type="molecule type" value="mRNA"/>
</dbReference>
<dbReference type="CCDS" id="CCDS24804.1">
    <molecule id="O09110-1"/>
</dbReference>
<dbReference type="RefSeq" id="NP_032954.1">
    <molecule id="O09110-1"/>
    <property type="nucleotide sequence ID" value="NM_008928.5"/>
</dbReference>
<dbReference type="PDB" id="1LEZ">
    <property type="method" value="X-ray"/>
    <property type="resolution" value="2.30 A"/>
    <property type="chains" value="B=16-32"/>
</dbReference>
<dbReference type="PDBsum" id="1LEZ"/>
<dbReference type="SMR" id="O09110"/>
<dbReference type="BioGRID" id="204951">
    <property type="interactions" value="10"/>
</dbReference>
<dbReference type="FunCoup" id="O09110">
    <property type="interactions" value="1245"/>
</dbReference>
<dbReference type="IntAct" id="O09110">
    <property type="interactions" value="1"/>
</dbReference>
<dbReference type="STRING" id="10090.ENSMUSP00000019076"/>
<dbReference type="ChEMBL" id="CHEMBL3721303"/>
<dbReference type="GlyGen" id="O09110">
    <property type="glycosylation" value="2 sites, 1 O-linked glycan (1 site)"/>
</dbReference>
<dbReference type="iPTMnet" id="O09110"/>
<dbReference type="PhosphoSitePlus" id="O09110"/>
<dbReference type="jPOST" id="O09110"/>
<dbReference type="PaxDb" id="10090-ENSMUSP00000019076"/>
<dbReference type="PeptideAtlas" id="O09110"/>
<dbReference type="ProteomicsDB" id="252600">
    <molecule id="O09110-1"/>
</dbReference>
<dbReference type="ProteomicsDB" id="252601">
    <molecule id="O09110-2"/>
</dbReference>
<dbReference type="Pumba" id="O09110"/>
<dbReference type="Antibodypedia" id="4342">
    <property type="antibodies" value="1472 antibodies from 43 providers"/>
</dbReference>
<dbReference type="DNASU" id="26397"/>
<dbReference type="Ensembl" id="ENSMUST00000019076.10">
    <molecule id="O09110-1"/>
    <property type="protein sequence ID" value="ENSMUSP00000019076.4"/>
    <property type="gene ID" value="ENSMUSG00000018932.10"/>
</dbReference>
<dbReference type="GeneID" id="26397"/>
<dbReference type="KEGG" id="mmu:26397"/>
<dbReference type="UCSC" id="uc007jgw.1">
    <molecule id="O09110-1"/>
    <property type="organism name" value="mouse"/>
</dbReference>
<dbReference type="AGR" id="MGI:1346868"/>
<dbReference type="CTD" id="5606"/>
<dbReference type="MGI" id="MGI:1346868">
    <property type="gene designation" value="Map2k3"/>
</dbReference>
<dbReference type="VEuPathDB" id="HostDB:ENSMUSG00000018932"/>
<dbReference type="eggNOG" id="KOG0984">
    <property type="taxonomic scope" value="Eukaryota"/>
</dbReference>
<dbReference type="GeneTree" id="ENSGT00940000160875"/>
<dbReference type="HOGENOM" id="CLU_000288_63_23_1"/>
<dbReference type="InParanoid" id="O09110"/>
<dbReference type="OMA" id="RISCVYK"/>
<dbReference type="OrthoDB" id="10252354at2759"/>
<dbReference type="PhylomeDB" id="O09110"/>
<dbReference type="TreeFam" id="TF350701"/>
<dbReference type="BRENDA" id="2.7.12.2">
    <property type="organism ID" value="3474"/>
</dbReference>
<dbReference type="Reactome" id="R-MMU-2559580">
    <property type="pathway name" value="Oxidative Stress Induced Senescence"/>
</dbReference>
<dbReference type="Reactome" id="R-MMU-450302">
    <property type="pathway name" value="activated TAK1 mediates p38 MAPK activation"/>
</dbReference>
<dbReference type="BioGRID-ORCS" id="26397">
    <property type="hits" value="8 hits in 79 CRISPR screens"/>
</dbReference>
<dbReference type="EvolutionaryTrace" id="O09110"/>
<dbReference type="PRO" id="PR:O09110"/>
<dbReference type="Proteomes" id="UP000000589">
    <property type="component" value="Chromosome 11"/>
</dbReference>
<dbReference type="RNAct" id="O09110">
    <property type="molecule type" value="protein"/>
</dbReference>
<dbReference type="Bgee" id="ENSMUSG00000018932">
    <property type="expression patterns" value="Expressed in temporalis muscle and 247 other cell types or tissues"/>
</dbReference>
<dbReference type="ExpressionAtlas" id="O09110">
    <property type="expression patterns" value="baseline and differential"/>
</dbReference>
<dbReference type="GO" id="GO:0005524">
    <property type="term" value="F:ATP binding"/>
    <property type="evidence" value="ECO:0007669"/>
    <property type="project" value="UniProtKB-KW"/>
</dbReference>
<dbReference type="GO" id="GO:0004708">
    <property type="term" value="F:MAP kinase kinase activity"/>
    <property type="evidence" value="ECO:0000314"/>
    <property type="project" value="MGI"/>
</dbReference>
<dbReference type="GO" id="GO:0019901">
    <property type="term" value="F:protein kinase binding"/>
    <property type="evidence" value="ECO:0000353"/>
    <property type="project" value="UniProtKB"/>
</dbReference>
<dbReference type="GO" id="GO:0106310">
    <property type="term" value="F:protein serine kinase activity"/>
    <property type="evidence" value="ECO:0007669"/>
    <property type="project" value="RHEA"/>
</dbReference>
<dbReference type="GO" id="GO:0004674">
    <property type="term" value="F:protein serine/threonine kinase activity"/>
    <property type="evidence" value="ECO:0007669"/>
    <property type="project" value="UniProtKB-KW"/>
</dbReference>
<dbReference type="GO" id="GO:0004713">
    <property type="term" value="F:protein tyrosine kinase activity"/>
    <property type="evidence" value="ECO:0007669"/>
    <property type="project" value="UniProtKB-KW"/>
</dbReference>
<dbReference type="GO" id="GO:0060048">
    <property type="term" value="P:cardiac muscle contraction"/>
    <property type="evidence" value="ECO:0000315"/>
    <property type="project" value="MGI"/>
</dbReference>
<dbReference type="GO" id="GO:0035924">
    <property type="term" value="P:cellular response to vascular endothelial growth factor stimulus"/>
    <property type="evidence" value="ECO:0007669"/>
    <property type="project" value="Ensembl"/>
</dbReference>
<dbReference type="GO" id="GO:0006954">
    <property type="term" value="P:inflammatory response"/>
    <property type="evidence" value="ECO:0000315"/>
    <property type="project" value="MGI"/>
</dbReference>
<dbReference type="GO" id="GO:0000165">
    <property type="term" value="P:MAPK cascade"/>
    <property type="evidence" value="ECO:0000314"/>
    <property type="project" value="MGI"/>
</dbReference>
<dbReference type="GO" id="GO:0035331">
    <property type="term" value="P:negative regulation of hippo signaling"/>
    <property type="evidence" value="ECO:0007669"/>
    <property type="project" value="Ensembl"/>
</dbReference>
<dbReference type="GO" id="GO:0038066">
    <property type="term" value="P:p38MAPK cascade"/>
    <property type="evidence" value="ECO:0007669"/>
    <property type="project" value="Ensembl"/>
</dbReference>
<dbReference type="GO" id="GO:0043536">
    <property type="term" value="P:positive regulation of blood vessel endothelial cell migration"/>
    <property type="evidence" value="ECO:0007669"/>
    <property type="project" value="Ensembl"/>
</dbReference>
<dbReference type="GO" id="GO:0045893">
    <property type="term" value="P:positive regulation of DNA-templated transcription"/>
    <property type="evidence" value="ECO:0007669"/>
    <property type="project" value="Ensembl"/>
</dbReference>
<dbReference type="GO" id="GO:0043410">
    <property type="term" value="P:positive regulation of MAPK cascade"/>
    <property type="evidence" value="ECO:0000314"/>
    <property type="project" value="MGI"/>
</dbReference>
<dbReference type="GO" id="GO:0001817">
    <property type="term" value="P:regulation of cytokine production"/>
    <property type="evidence" value="ECO:0000315"/>
    <property type="project" value="MGI"/>
</dbReference>
<dbReference type="GO" id="GO:0031098">
    <property type="term" value="P:stress-activated protein kinase signaling cascade"/>
    <property type="evidence" value="ECO:0007669"/>
    <property type="project" value="Ensembl"/>
</dbReference>
<dbReference type="CDD" id="cd06617">
    <property type="entry name" value="PKc_MKK3_6"/>
    <property type="match status" value="1"/>
</dbReference>
<dbReference type="FunFam" id="3.30.200.20:FF:000040">
    <property type="entry name" value="Dual specificity mitogen-activated protein kinase kinase"/>
    <property type="match status" value="1"/>
</dbReference>
<dbReference type="FunFam" id="1.10.510.10:FF:000158">
    <property type="entry name" value="Dual specificity mitogen-activated protein kinase kinase 6"/>
    <property type="match status" value="1"/>
</dbReference>
<dbReference type="Gene3D" id="3.30.200.20">
    <property type="entry name" value="Phosphorylase Kinase, domain 1"/>
    <property type="match status" value="1"/>
</dbReference>
<dbReference type="Gene3D" id="1.10.510.10">
    <property type="entry name" value="Transferase(Phosphotransferase) domain 1"/>
    <property type="match status" value="1"/>
</dbReference>
<dbReference type="IDEAL" id="IID50191"/>
<dbReference type="InterPro" id="IPR011009">
    <property type="entry name" value="Kinase-like_dom_sf"/>
</dbReference>
<dbReference type="InterPro" id="IPR000719">
    <property type="entry name" value="Prot_kinase_dom"/>
</dbReference>
<dbReference type="InterPro" id="IPR017441">
    <property type="entry name" value="Protein_kinase_ATP_BS"/>
</dbReference>
<dbReference type="InterPro" id="IPR008271">
    <property type="entry name" value="Ser/Thr_kinase_AS"/>
</dbReference>
<dbReference type="PANTHER" id="PTHR48013:SF21">
    <property type="entry name" value="DUAL SPECIFICITY MITOGEN-ACTIVATED PROTEIN KINASE KINASE 3"/>
    <property type="match status" value="1"/>
</dbReference>
<dbReference type="PANTHER" id="PTHR48013">
    <property type="entry name" value="DUAL SPECIFICITY MITOGEN-ACTIVATED PROTEIN KINASE KINASE 5-RELATED"/>
    <property type="match status" value="1"/>
</dbReference>
<dbReference type="Pfam" id="PF00069">
    <property type="entry name" value="Pkinase"/>
    <property type="match status" value="1"/>
</dbReference>
<dbReference type="SMART" id="SM00220">
    <property type="entry name" value="S_TKc"/>
    <property type="match status" value="1"/>
</dbReference>
<dbReference type="SUPFAM" id="SSF56112">
    <property type="entry name" value="Protein kinase-like (PK-like)"/>
    <property type="match status" value="1"/>
</dbReference>
<dbReference type="PROSITE" id="PS00107">
    <property type="entry name" value="PROTEIN_KINASE_ATP"/>
    <property type="match status" value="1"/>
</dbReference>
<dbReference type="PROSITE" id="PS50011">
    <property type="entry name" value="PROTEIN_KINASE_DOM"/>
    <property type="match status" value="1"/>
</dbReference>
<dbReference type="PROSITE" id="PS00108">
    <property type="entry name" value="PROTEIN_KINASE_ST"/>
    <property type="match status" value="1"/>
</dbReference>
<organism>
    <name type="scientific">Mus musculus</name>
    <name type="common">Mouse</name>
    <dbReference type="NCBI Taxonomy" id="10090"/>
    <lineage>
        <taxon>Eukaryota</taxon>
        <taxon>Metazoa</taxon>
        <taxon>Chordata</taxon>
        <taxon>Craniata</taxon>
        <taxon>Vertebrata</taxon>
        <taxon>Euteleostomi</taxon>
        <taxon>Mammalia</taxon>
        <taxon>Eutheria</taxon>
        <taxon>Euarchontoglires</taxon>
        <taxon>Glires</taxon>
        <taxon>Rodentia</taxon>
        <taxon>Myomorpha</taxon>
        <taxon>Muroidea</taxon>
        <taxon>Muridae</taxon>
        <taxon>Murinae</taxon>
        <taxon>Mus</taxon>
        <taxon>Mus</taxon>
    </lineage>
</organism>
<keyword id="KW-0002">3D-structure</keyword>
<keyword id="KW-0007">Acetylation</keyword>
<keyword id="KW-0025">Alternative splicing</keyword>
<keyword id="KW-0067">ATP-binding</keyword>
<keyword id="KW-0418">Kinase</keyword>
<keyword id="KW-0547">Nucleotide-binding</keyword>
<keyword id="KW-0597">Phosphoprotein</keyword>
<keyword id="KW-1185">Reference proteome</keyword>
<keyword id="KW-0723">Serine/threonine-protein kinase</keyword>
<keyword id="KW-0808">Transferase</keyword>
<keyword id="KW-0829">Tyrosine-protein kinase</keyword>
<feature type="chain" id="PRO_0000086379" description="Dual specificity mitogen-activated protein kinase kinase 3">
    <location>
        <begin position="1"/>
        <end position="347"/>
    </location>
</feature>
<feature type="domain" description="Protein kinase" evidence="2">
    <location>
        <begin position="64"/>
        <end position="325"/>
    </location>
</feature>
<feature type="region of interest" description="Disordered" evidence="4">
    <location>
        <begin position="1"/>
        <end position="45"/>
    </location>
</feature>
<feature type="compositionally biased region" description="Pro residues" evidence="4">
    <location>
        <begin position="1"/>
        <end position="11"/>
    </location>
</feature>
<feature type="active site" description="Proton acceptor" evidence="2 3">
    <location>
        <position position="190"/>
    </location>
</feature>
<feature type="binding site" evidence="2">
    <location>
        <begin position="70"/>
        <end position="78"/>
    </location>
    <ligand>
        <name>ATP</name>
        <dbReference type="ChEBI" id="CHEBI:30616"/>
    </ligand>
</feature>
<feature type="binding site" evidence="2">
    <location>
        <position position="93"/>
    </location>
    <ligand>
        <name>ATP</name>
        <dbReference type="ChEBI" id="CHEBI:30616"/>
    </ligand>
</feature>
<feature type="modified residue" description="N-acetylmethionine" evidence="1">
    <location>
        <position position="1"/>
    </location>
</feature>
<feature type="modified residue" description="Phosphoserine" evidence="1">
    <location>
        <position position="3"/>
    </location>
</feature>
<feature type="modified residue" description="Phosphoserine" evidence="1">
    <location>
        <position position="218"/>
    </location>
</feature>
<feature type="modified residue" description="Phosphothreonine" evidence="1">
    <location>
        <position position="222"/>
    </location>
</feature>
<feature type="splice variant" id="VSP_004879" description="In isoform 1." evidence="6 7">
    <original>MESPAASPPASLPQTKGKSKRKKDLRISCVSKPPVSN</original>
    <variation>MSKP</variation>
    <location>
        <begin position="1"/>
        <end position="37"/>
    </location>
</feature>
<feature type="sequence conflict" description="In Ref. 1." evidence="8" ref="1">
    <original>T</original>
    <variation>A</variation>
    <location>
        <position position="39"/>
    </location>
</feature>
<feature type="sequence conflict" description="In Ref. 1; CAA63649." evidence="8" ref="1">
    <original>E</original>
    <variation>K</variation>
    <location>
        <position position="60"/>
    </location>
</feature>
<feature type="sequence conflict" description="In Ref. 4." evidence="8" ref="4">
    <original>IVRALEHLHSKLSVIHRDVKPSNVLINKEGHVKMCDFGISGYLVDSVAKTMDAGCKPYMAPERINPELNQKGYNVKSDVWSLGITMIEMAILRFPYESWGTPFQQLKQVVEEPSPQLPADQFSPEFVDFTSQCLRKNPAERMSYLELMEHPFFTLHKTKKTDIAAFVKEILGEDS</original>
    <variation>M</variation>
    <location>
        <begin position="173"/>
        <end position="347"/>
    </location>
</feature>
<feature type="sequence conflict" description="In Ref. 1; CAA63649." evidence="8" ref="1">
    <original>V</original>
    <variation>E</variation>
    <location>
        <position position="216"/>
    </location>
</feature>
<feature type="sequence conflict" description="In Ref. 1; CAA63649." evidence="8" ref="1">
    <original>D</original>
    <variation>Y</variation>
    <location>
        <position position="292"/>
    </location>
</feature>